<feature type="chain" id="PRO_0000108595" description="Ribosomal RNA small subunit methyltransferase H">
    <location>
        <begin position="1"/>
        <end position="315"/>
    </location>
</feature>
<feature type="binding site" evidence="1">
    <location>
        <begin position="35"/>
        <end position="37"/>
    </location>
    <ligand>
        <name>S-adenosyl-L-methionine</name>
        <dbReference type="ChEBI" id="CHEBI:59789"/>
    </ligand>
</feature>
<feature type="binding site" evidence="1">
    <location>
        <position position="55"/>
    </location>
    <ligand>
        <name>S-adenosyl-L-methionine</name>
        <dbReference type="ChEBI" id="CHEBI:59789"/>
    </ligand>
</feature>
<feature type="binding site" evidence="1">
    <location>
        <position position="80"/>
    </location>
    <ligand>
        <name>S-adenosyl-L-methionine</name>
        <dbReference type="ChEBI" id="CHEBI:59789"/>
    </ligand>
</feature>
<feature type="binding site" evidence="1">
    <location>
        <position position="102"/>
    </location>
    <ligand>
        <name>S-adenosyl-L-methionine</name>
        <dbReference type="ChEBI" id="CHEBI:59789"/>
    </ligand>
</feature>
<feature type="binding site" evidence="1">
    <location>
        <position position="109"/>
    </location>
    <ligand>
        <name>S-adenosyl-L-methionine</name>
        <dbReference type="ChEBI" id="CHEBI:59789"/>
    </ligand>
</feature>
<comment type="function">
    <text evidence="1">Specifically methylates the N4 position of cytidine in position 1402 (C1402) of 16S rRNA.</text>
</comment>
<comment type="catalytic activity">
    <reaction evidence="1">
        <text>cytidine(1402) in 16S rRNA + S-adenosyl-L-methionine = N(4)-methylcytidine(1402) in 16S rRNA + S-adenosyl-L-homocysteine + H(+)</text>
        <dbReference type="Rhea" id="RHEA:42928"/>
        <dbReference type="Rhea" id="RHEA-COMP:10286"/>
        <dbReference type="Rhea" id="RHEA-COMP:10287"/>
        <dbReference type="ChEBI" id="CHEBI:15378"/>
        <dbReference type="ChEBI" id="CHEBI:57856"/>
        <dbReference type="ChEBI" id="CHEBI:59789"/>
        <dbReference type="ChEBI" id="CHEBI:74506"/>
        <dbReference type="ChEBI" id="CHEBI:82748"/>
        <dbReference type="EC" id="2.1.1.199"/>
    </reaction>
</comment>
<comment type="subcellular location">
    <subcellularLocation>
        <location evidence="1">Cytoplasm</location>
    </subcellularLocation>
</comment>
<comment type="similarity">
    <text evidence="1">Belongs to the methyltransferase superfamily. RsmH family.</text>
</comment>
<keyword id="KW-0963">Cytoplasm</keyword>
<keyword id="KW-0489">Methyltransferase</keyword>
<keyword id="KW-1185">Reference proteome</keyword>
<keyword id="KW-0698">rRNA processing</keyword>
<keyword id="KW-0949">S-adenosyl-L-methionine</keyword>
<keyword id="KW-0808">Transferase</keyword>
<gene>
    <name evidence="1" type="primary">rsmH</name>
    <name type="synonym">mraW</name>
    <name type="ordered locus">bbp_206</name>
</gene>
<protein>
    <recommendedName>
        <fullName evidence="1">Ribosomal RNA small subunit methyltransferase H</fullName>
        <ecNumber evidence="1">2.1.1.199</ecNumber>
    </recommendedName>
    <alternativeName>
        <fullName evidence="1">16S rRNA m(4)C1402 methyltransferase</fullName>
    </alternativeName>
    <alternativeName>
        <fullName evidence="1">rRNA (cytosine-N(4)-)-methyltransferase RsmH</fullName>
    </alternativeName>
</protein>
<dbReference type="EC" id="2.1.1.199" evidence="1"/>
<dbReference type="EMBL" id="AE016826">
    <property type="protein sequence ID" value="AAO26938.1"/>
    <property type="molecule type" value="Genomic_DNA"/>
</dbReference>
<dbReference type="RefSeq" id="WP_011091339.1">
    <property type="nucleotide sequence ID" value="NC_004545.1"/>
</dbReference>
<dbReference type="SMR" id="P59522"/>
<dbReference type="STRING" id="224915.bbp_206"/>
<dbReference type="KEGG" id="bab:bbp_206"/>
<dbReference type="eggNOG" id="COG0275">
    <property type="taxonomic scope" value="Bacteria"/>
</dbReference>
<dbReference type="HOGENOM" id="CLU_038422_2_0_6"/>
<dbReference type="OrthoDB" id="9806637at2"/>
<dbReference type="Proteomes" id="UP000000601">
    <property type="component" value="Chromosome"/>
</dbReference>
<dbReference type="GO" id="GO:0005737">
    <property type="term" value="C:cytoplasm"/>
    <property type="evidence" value="ECO:0007669"/>
    <property type="project" value="UniProtKB-SubCell"/>
</dbReference>
<dbReference type="GO" id="GO:0071424">
    <property type="term" value="F:rRNA (cytosine-N4-)-methyltransferase activity"/>
    <property type="evidence" value="ECO:0007669"/>
    <property type="project" value="UniProtKB-UniRule"/>
</dbReference>
<dbReference type="GO" id="GO:0070475">
    <property type="term" value="P:rRNA base methylation"/>
    <property type="evidence" value="ECO:0007669"/>
    <property type="project" value="UniProtKB-UniRule"/>
</dbReference>
<dbReference type="Gene3D" id="1.10.150.170">
    <property type="entry name" value="Putative methyltransferase TM0872, insert domain"/>
    <property type="match status" value="1"/>
</dbReference>
<dbReference type="Gene3D" id="3.40.50.150">
    <property type="entry name" value="Vaccinia Virus protein VP39"/>
    <property type="match status" value="1"/>
</dbReference>
<dbReference type="HAMAP" id="MF_01007">
    <property type="entry name" value="16SrRNA_methyltr_H"/>
    <property type="match status" value="1"/>
</dbReference>
<dbReference type="InterPro" id="IPR002903">
    <property type="entry name" value="RsmH"/>
</dbReference>
<dbReference type="InterPro" id="IPR023397">
    <property type="entry name" value="SAM-dep_MeTrfase_MraW_recog"/>
</dbReference>
<dbReference type="InterPro" id="IPR029063">
    <property type="entry name" value="SAM-dependent_MTases_sf"/>
</dbReference>
<dbReference type="NCBIfam" id="TIGR00006">
    <property type="entry name" value="16S rRNA (cytosine(1402)-N(4))-methyltransferase RsmH"/>
    <property type="match status" value="1"/>
</dbReference>
<dbReference type="PANTHER" id="PTHR11265:SF0">
    <property type="entry name" value="12S RRNA N4-METHYLCYTIDINE METHYLTRANSFERASE"/>
    <property type="match status" value="1"/>
</dbReference>
<dbReference type="PANTHER" id="PTHR11265">
    <property type="entry name" value="S-ADENOSYL-METHYLTRANSFERASE MRAW"/>
    <property type="match status" value="1"/>
</dbReference>
<dbReference type="Pfam" id="PF01795">
    <property type="entry name" value="Methyltransf_5"/>
    <property type="match status" value="1"/>
</dbReference>
<dbReference type="PIRSF" id="PIRSF004486">
    <property type="entry name" value="MraW"/>
    <property type="match status" value="1"/>
</dbReference>
<dbReference type="SUPFAM" id="SSF81799">
    <property type="entry name" value="Putative methyltransferase TM0872, insert domain"/>
    <property type="match status" value="1"/>
</dbReference>
<dbReference type="SUPFAM" id="SSF53335">
    <property type="entry name" value="S-adenosyl-L-methionine-dependent methyltransferases"/>
    <property type="match status" value="1"/>
</dbReference>
<proteinExistence type="inferred from homology"/>
<evidence type="ECO:0000255" key="1">
    <source>
        <dbReference type="HAMAP-Rule" id="MF_01007"/>
    </source>
</evidence>
<reference key="1">
    <citation type="journal article" date="2003" name="Proc. Natl. Acad. Sci. U.S.A.">
        <title>Reductive genome evolution in Buchnera aphidicola.</title>
        <authorList>
            <person name="van Ham R.C.H.J."/>
            <person name="Kamerbeek J."/>
            <person name="Palacios C."/>
            <person name="Rausell C."/>
            <person name="Abascal F."/>
            <person name="Bastolla U."/>
            <person name="Fernandez J.M."/>
            <person name="Jimenez L."/>
            <person name="Postigo M."/>
            <person name="Silva F.J."/>
            <person name="Tamames J."/>
            <person name="Viguera E."/>
            <person name="Latorre A."/>
            <person name="Valencia A."/>
            <person name="Moran F."/>
            <person name="Moya A."/>
        </authorList>
    </citation>
    <scope>NUCLEOTIDE SEQUENCE [LARGE SCALE GENOMIC DNA]</scope>
    <source>
        <strain>Bp</strain>
    </source>
</reference>
<accession>P59522</accession>
<organism>
    <name type="scientific">Buchnera aphidicola subsp. Baizongia pistaciae (strain Bp)</name>
    <dbReference type="NCBI Taxonomy" id="224915"/>
    <lineage>
        <taxon>Bacteria</taxon>
        <taxon>Pseudomonadati</taxon>
        <taxon>Pseudomonadota</taxon>
        <taxon>Gammaproteobacteria</taxon>
        <taxon>Enterobacterales</taxon>
        <taxon>Erwiniaceae</taxon>
        <taxon>Buchnera</taxon>
    </lineage>
</organism>
<name>RSMH_BUCBP</name>
<sequence>MKNNFSHTPVLLNETIQNLDIKNDGIYIDATFGYGGHSKEILKHLGKNGKLYSIDQDPYAIKIANKLKNDTRFNIIHGKFSNILKYSNKNKIRGKVNGILLDLGMSSMQINNPNRGFSFISDGPLDMRMNPNTGIPAYMWLKKTNLTTLYHVLKKYGEEPFSKKIAYNIIAYNKKKTITRTLELSKIITNSIPIKKYRKHPARRVFQAIRIYINHEIYELQQALEHVLNILIPGGKLLILSFHSLEDRTVKKFMIKYSKPPFVPPGLAITETQLKSLANKQLKIITKIFPSTIEIRKNPRAHSAILRVAQKNNNE</sequence>